<dbReference type="EC" id="2.4.1.221" evidence="3"/>
<dbReference type="EC" id="2.4.1.-" evidence="2 3"/>
<dbReference type="EMBL" id="AJ880010">
    <property type="protein sequence ID" value="CAI53945.1"/>
    <property type="molecule type" value="mRNA"/>
</dbReference>
<dbReference type="EMBL" id="AJ879584">
    <property type="protein sequence ID" value="CAI52074.1"/>
    <property type="molecule type" value="mRNA"/>
</dbReference>
<dbReference type="RefSeq" id="NP_001012360.1">
    <property type="nucleotide sequence ID" value="NM_001012360.1"/>
</dbReference>
<dbReference type="SMR" id="Q5F2L1"/>
<dbReference type="FunCoup" id="Q5F2L1">
    <property type="interactions" value="561"/>
</dbReference>
<dbReference type="STRING" id="10116.ENSRNOP00000065788"/>
<dbReference type="CAZy" id="GT10">
    <property type="family name" value="Glycosyltransferase Family 10"/>
</dbReference>
<dbReference type="GlyCosmos" id="Q5F2L1">
    <property type="glycosylation" value="4 sites, No reported glycans"/>
</dbReference>
<dbReference type="GlyGen" id="Q5F2L1">
    <property type="glycosylation" value="4 sites"/>
</dbReference>
<dbReference type="PhosphoSitePlus" id="Q5F2L1"/>
<dbReference type="PaxDb" id="10116-ENSRNOP00000065788"/>
<dbReference type="GeneID" id="497619"/>
<dbReference type="KEGG" id="rno:497619"/>
<dbReference type="AGR" id="RGD:1359164"/>
<dbReference type="CTD" id="84750"/>
<dbReference type="RGD" id="1359164">
    <property type="gene designation" value="Fut10"/>
</dbReference>
<dbReference type="eggNOG" id="KOG2619">
    <property type="taxonomic scope" value="Eukaryota"/>
</dbReference>
<dbReference type="InParanoid" id="Q5F2L1"/>
<dbReference type="OrthoDB" id="9993460at2759"/>
<dbReference type="PhylomeDB" id="Q5F2L1"/>
<dbReference type="Reactome" id="R-RNO-9037629">
    <property type="pathway name" value="Lewis blood group biosynthesis"/>
</dbReference>
<dbReference type="UniPathway" id="UPA00378"/>
<dbReference type="PRO" id="PR:Q5F2L1"/>
<dbReference type="Proteomes" id="UP000002494">
    <property type="component" value="Unplaced"/>
</dbReference>
<dbReference type="GO" id="GO:0005783">
    <property type="term" value="C:endoplasmic reticulum"/>
    <property type="evidence" value="ECO:0000250"/>
    <property type="project" value="UniProtKB"/>
</dbReference>
<dbReference type="GO" id="GO:0005789">
    <property type="term" value="C:endoplasmic reticulum membrane"/>
    <property type="evidence" value="ECO:0007669"/>
    <property type="project" value="UniProtKB-SubCell"/>
</dbReference>
<dbReference type="GO" id="GO:0000139">
    <property type="term" value="C:Golgi membrane"/>
    <property type="evidence" value="ECO:0007669"/>
    <property type="project" value="InterPro"/>
</dbReference>
<dbReference type="GO" id="GO:0046920">
    <property type="term" value="F:alpha-(1-&gt;3)-fucosyltransferase activity"/>
    <property type="evidence" value="ECO:0000266"/>
    <property type="project" value="RGD"/>
</dbReference>
<dbReference type="GO" id="GO:0008417">
    <property type="term" value="F:fucosyltransferase activity"/>
    <property type="evidence" value="ECO:0000250"/>
    <property type="project" value="UniProtKB"/>
</dbReference>
<dbReference type="GO" id="GO:0046922">
    <property type="term" value="F:peptide-O-fucosyltransferase activity"/>
    <property type="evidence" value="ECO:0000250"/>
    <property type="project" value="UniProtKB"/>
</dbReference>
<dbReference type="GO" id="GO:0021799">
    <property type="term" value="P:cerebral cortex radially oriented cell migration"/>
    <property type="evidence" value="ECO:0000266"/>
    <property type="project" value="RGD"/>
</dbReference>
<dbReference type="GO" id="GO:0036065">
    <property type="term" value="P:fucosylation"/>
    <property type="evidence" value="ECO:0000318"/>
    <property type="project" value="GO_Central"/>
</dbReference>
<dbReference type="GO" id="GO:0036071">
    <property type="term" value="P:N-glycan fucosylation"/>
    <property type="evidence" value="ECO:0000250"/>
    <property type="project" value="UniProtKB"/>
</dbReference>
<dbReference type="GO" id="GO:0097402">
    <property type="term" value="P:neuroblast migration"/>
    <property type="evidence" value="ECO:0000266"/>
    <property type="project" value="RGD"/>
</dbReference>
<dbReference type="GO" id="GO:0036445">
    <property type="term" value="P:neuronal stem cell division"/>
    <property type="evidence" value="ECO:0000250"/>
    <property type="project" value="UniProtKB"/>
</dbReference>
<dbReference type="GO" id="GO:0097150">
    <property type="term" value="P:neuronal stem cell population maintenance"/>
    <property type="evidence" value="ECO:0000266"/>
    <property type="project" value="RGD"/>
</dbReference>
<dbReference type="GO" id="GO:0009312">
    <property type="term" value="P:oligosaccharide biosynthetic process"/>
    <property type="evidence" value="ECO:0000266"/>
    <property type="project" value="RGD"/>
</dbReference>
<dbReference type="GO" id="GO:0050714">
    <property type="term" value="P:positive regulation of protein secretion"/>
    <property type="evidence" value="ECO:0000250"/>
    <property type="project" value="UniProtKB"/>
</dbReference>
<dbReference type="FunFam" id="3.40.50.11660:FF:000002">
    <property type="entry name" value="Alpha-(1,3)-fucosyltransferase"/>
    <property type="match status" value="1"/>
</dbReference>
<dbReference type="Gene3D" id="3.40.50.11660">
    <property type="entry name" value="Glycosyl transferase family 10, C-terminal domain"/>
    <property type="match status" value="1"/>
</dbReference>
<dbReference type="InterPro" id="IPR017176">
    <property type="entry name" value="Alpha-1_3-FUT_met"/>
</dbReference>
<dbReference type="InterPro" id="IPR055270">
    <property type="entry name" value="Glyco_tran_10_C"/>
</dbReference>
<dbReference type="InterPro" id="IPR031481">
    <property type="entry name" value="Glyco_tran_10_N"/>
</dbReference>
<dbReference type="InterPro" id="IPR001503">
    <property type="entry name" value="Glyco_trans_10"/>
</dbReference>
<dbReference type="InterPro" id="IPR038577">
    <property type="entry name" value="GT10-like_C_sf"/>
</dbReference>
<dbReference type="PANTHER" id="PTHR11929">
    <property type="entry name" value="ALPHA- 1,3 -FUCOSYLTRANSFERASE"/>
    <property type="match status" value="1"/>
</dbReference>
<dbReference type="PANTHER" id="PTHR11929:SF194">
    <property type="entry name" value="ALPHA-(1,3)-FUCOSYLTRANSFERASE 10"/>
    <property type="match status" value="1"/>
</dbReference>
<dbReference type="Pfam" id="PF17039">
    <property type="entry name" value="Glyco_tran_10_N"/>
    <property type="match status" value="1"/>
</dbReference>
<dbReference type="Pfam" id="PF00852">
    <property type="entry name" value="Glyco_transf_10"/>
    <property type="match status" value="1"/>
</dbReference>
<dbReference type="PIRSF" id="PIRSF037332">
    <property type="entry name" value="Alpha1_3FUT_met"/>
    <property type="match status" value="1"/>
</dbReference>
<dbReference type="SUPFAM" id="SSF53756">
    <property type="entry name" value="UDP-Glycosyltransferase/glycogen phosphorylase"/>
    <property type="match status" value="1"/>
</dbReference>
<sequence>MVRIPRRKLLPSCLCMTATVFLMVTVQVLVELGKFERKKFKNSDLQDGQKDVEGDPKHLNPLPKKDALALSGRNKVDAGSYPIVLWWSPLTGETGRLGQCGADACFFTINRTFQHHPMTKAFLFYGTDFNIDSLPLPRKAHHDWALFHEESPKNNYKLFHKPVITLFNHTATFSRHSDLPLTTQYLESVEVLKSLRYLVPLQSKNNLRQKLAPLVYVQSDCDPPSDRDSYVRELMAYIEVDSYGECLQNKHLPQQLKNPASMDADAFYRVLAQYKFILAFENAVCDDYITEKFWRPLKLGVVPVYYGSPTIADWLPSNRSAILVSEFSHPRELASFIRRLDYDDGLYETYVEWKLKGEISNQRLLTALREREWGVQDINQDNYIDTFECMVCRRVWANRRLQEQGLPPKQWKADVSHLHCPEPTLFAFSSPASPALRGRSLRELWLPSFQQSKKEAQALRWLVDRNQNFSSEEFWALVFKDSF</sequence>
<organism>
    <name type="scientific">Rattus norvegicus</name>
    <name type="common">Rat</name>
    <dbReference type="NCBI Taxonomy" id="10116"/>
    <lineage>
        <taxon>Eukaryota</taxon>
        <taxon>Metazoa</taxon>
        <taxon>Chordata</taxon>
        <taxon>Craniata</taxon>
        <taxon>Vertebrata</taxon>
        <taxon>Euteleostomi</taxon>
        <taxon>Mammalia</taxon>
        <taxon>Eutheria</taxon>
        <taxon>Euarchontoglires</taxon>
        <taxon>Glires</taxon>
        <taxon>Rodentia</taxon>
        <taxon>Myomorpha</taxon>
        <taxon>Muroidea</taxon>
        <taxon>Muridae</taxon>
        <taxon>Murinae</taxon>
        <taxon>Rattus</taxon>
    </lineage>
</organism>
<evidence type="ECO:0000250" key="1">
    <source>
        <dbReference type="UniProtKB" id="Q11130"/>
    </source>
</evidence>
<evidence type="ECO:0000250" key="2">
    <source>
        <dbReference type="UniProtKB" id="Q5F2L2"/>
    </source>
</evidence>
<evidence type="ECO:0000250" key="3">
    <source>
        <dbReference type="UniProtKB" id="Q6P4F1"/>
    </source>
</evidence>
<evidence type="ECO:0000255" key="4"/>
<evidence type="ECO:0000256" key="5">
    <source>
        <dbReference type="SAM" id="MobiDB-lite"/>
    </source>
</evidence>
<evidence type="ECO:0000303" key="6">
    <source ref="1"/>
</evidence>
<evidence type="ECO:0000305" key="7"/>
<proteinExistence type="evidence at transcript level"/>
<gene>
    <name type="primary">Fut10</name>
    <name evidence="3" type="synonym">Pofut3</name>
</gene>
<comment type="function">
    <text evidence="2 3">Protein O-fucosyltransferase that specifically catalyzes O-fucosylation of serine or threonine residues in EMI domains of target proteins, such as MMRN1, MMRN2 and EMID1. Attaches fucose through an O-glycosidic linkage. O-fucosylation of EMI domain-containing proteins may be required for facilitating protein folding and secretion. May also show alpha-(1,3)-fucosyltransferase activity toward the innermost N-acetyl glucosamine (GlcNAc) residue in biantennary N-glycan acceptors. However, this was tested with a library of synthetic substrates and this activity is unsure in vivo (By similarity). May be involved in biosynthesis of Lewis X-carrying biantennary N-glycans that regulate neuron stem cell self-renewal during brain development (By similarity).</text>
</comment>
<comment type="catalytic activity">
    <reaction evidence="3">
        <text>L-threonyl-[protein] + GDP-beta-L-fucose = 3-O-(alpha-L-fucosyl)-L-threonyl-[protein] + GDP + H(+)</text>
        <dbReference type="Rhea" id="RHEA:70491"/>
        <dbReference type="Rhea" id="RHEA-COMP:11060"/>
        <dbReference type="Rhea" id="RHEA-COMP:17915"/>
        <dbReference type="ChEBI" id="CHEBI:15378"/>
        <dbReference type="ChEBI" id="CHEBI:30013"/>
        <dbReference type="ChEBI" id="CHEBI:57273"/>
        <dbReference type="ChEBI" id="CHEBI:58189"/>
        <dbReference type="ChEBI" id="CHEBI:189631"/>
        <dbReference type="EC" id="2.4.1.221"/>
    </reaction>
    <physiologicalReaction direction="left-to-right" evidence="3">
        <dbReference type="Rhea" id="RHEA:70492"/>
    </physiologicalReaction>
</comment>
<comment type="catalytic activity">
    <reaction evidence="3">
        <text>L-seryl-[protein] + GDP-beta-L-fucose = 3-O-(alpha-L-fucosyl)-L-seryl-[protein] + GDP + H(+)</text>
        <dbReference type="Rhea" id="RHEA:63644"/>
        <dbReference type="Rhea" id="RHEA-COMP:9863"/>
        <dbReference type="Rhea" id="RHEA-COMP:17914"/>
        <dbReference type="ChEBI" id="CHEBI:15378"/>
        <dbReference type="ChEBI" id="CHEBI:29999"/>
        <dbReference type="ChEBI" id="CHEBI:57273"/>
        <dbReference type="ChEBI" id="CHEBI:58189"/>
        <dbReference type="ChEBI" id="CHEBI:189632"/>
        <dbReference type="EC" id="2.4.1.221"/>
    </reaction>
    <physiologicalReaction direction="left-to-right" evidence="3">
        <dbReference type="Rhea" id="RHEA:63645"/>
    </physiologicalReaction>
</comment>
<comment type="pathway">
    <text evidence="3">Protein modification; protein glycosylation.</text>
</comment>
<comment type="subcellular location">
    <subcellularLocation>
        <location evidence="3">Endoplasmic reticulum membrane</location>
        <topology evidence="4">Single-pass type II membrane protein</topology>
    </subcellularLocation>
</comment>
<comment type="alternative products">
    <event type="alternative splicing"/>
    <isoform>
        <id>Q5F2L1-1</id>
        <name>1</name>
        <name>Fut10A</name>
        <sequence type="displayed"/>
    </isoform>
    <isoform>
        <id>Q5F2L1-2</id>
        <name>2</name>
        <sequence type="described" ref="VSP_027510"/>
    </isoform>
</comment>
<comment type="similarity">
    <text evidence="7">Belongs to the glycosyltransferase 10 family.</text>
</comment>
<reference key="1">
    <citation type="submission" date="2005-02" db="EMBL/GenBank/DDBJ databases">
        <title>Phylogeny of fucosyltransferases.</title>
        <authorList>
            <person name="Martinez-Duncker I."/>
            <person name="Oriol R."/>
            <person name="Mollicone R."/>
        </authorList>
    </citation>
    <scope>NUCLEOTIDE SEQUENCE [MRNA] (ISOFORMS 1 AND 2)</scope>
    <source>
        <strain>Wistar</strain>
    </source>
</reference>
<feature type="chain" id="PRO_0000299004" description="GDP-fucose protein O-fucosyltransferase 3">
    <location>
        <begin position="1"/>
        <end position="483"/>
    </location>
</feature>
<feature type="topological domain" description="Cytoplasmic" evidence="4">
    <location>
        <begin position="1"/>
        <end position="8"/>
    </location>
</feature>
<feature type="transmembrane region" description="Helical; Signal-anchor for type II membrane protein" evidence="4">
    <location>
        <begin position="9"/>
        <end position="31"/>
    </location>
</feature>
<feature type="topological domain" description="Lumenal" evidence="4">
    <location>
        <begin position="32"/>
        <end position="483"/>
    </location>
</feature>
<feature type="region of interest" description="Disordered" evidence="5">
    <location>
        <begin position="45"/>
        <end position="64"/>
    </location>
</feature>
<feature type="glycosylation site" description="N-linked (GlcNAc...) asparagine" evidence="4">
    <location>
        <position position="110"/>
    </location>
</feature>
<feature type="glycosylation site" description="N-linked (GlcNAc...) asparagine" evidence="4">
    <location>
        <position position="168"/>
    </location>
</feature>
<feature type="glycosylation site" description="N-linked (GlcNAc...) asparagine" evidence="4">
    <location>
        <position position="318"/>
    </location>
</feature>
<feature type="glycosylation site" description="N-linked (GlcNAc...) asparagine" evidence="4">
    <location>
        <position position="468"/>
    </location>
</feature>
<feature type="disulfide bond" evidence="1">
    <location>
        <begin position="389"/>
        <end position="392"/>
    </location>
</feature>
<feature type="splice variant" id="VSP_027510" description="In isoform 2." evidence="6">
    <original>GLPPKQWKADVSHLHCPEPTLFAFSSPASPALRGRSLRELWLPSFQQSKKEAQALRWLVDRNQNFSSEEFWALVFKDSF</original>
    <variation>VSGWKSGGGRGLSLGVVLVFLLWLLPATVLHS</variation>
    <location>
        <begin position="405"/>
        <end position="483"/>
    </location>
</feature>
<name>OFUT3_RAT</name>
<accession>Q5F2L1</accession>
<accession>Q5F2N5</accession>
<protein>
    <recommendedName>
        <fullName>GDP-fucose protein O-fucosyltransferase 3</fullName>
        <ecNumber evidence="3">2.4.1.221</ecNumber>
    </recommendedName>
    <alternativeName>
        <fullName>Alpha-(1,3)-fucosyltransferase 10</fullName>
        <ecNumber evidence="2 3">2.4.1.-</ecNumber>
    </alternativeName>
    <alternativeName>
        <fullName>Fucosyltransferase X</fullName>
        <shortName>Fuc-TX</shortName>
        <shortName>FucT-X</shortName>
    </alternativeName>
    <alternativeName>
        <fullName>Galactoside 3-L-fucosyltransferase 10</fullName>
        <shortName>Fucosyltransferase 10</shortName>
    </alternativeName>
</protein>
<keyword id="KW-0025">Alternative splicing</keyword>
<keyword id="KW-1015">Disulfide bond</keyword>
<keyword id="KW-0256">Endoplasmic reticulum</keyword>
<keyword id="KW-0325">Glycoprotein</keyword>
<keyword id="KW-0328">Glycosyltransferase</keyword>
<keyword id="KW-0472">Membrane</keyword>
<keyword id="KW-1185">Reference proteome</keyword>
<keyword id="KW-0735">Signal-anchor</keyword>
<keyword id="KW-0808">Transferase</keyword>
<keyword id="KW-0812">Transmembrane</keyword>
<keyword id="KW-1133">Transmembrane helix</keyword>